<feature type="chain" id="PRO_0000059241" description="Uncharacterized glycosyltransferase MG025">
    <location>
        <begin position="1"/>
        <end position="298"/>
    </location>
</feature>
<feature type="sequence conflict" description="In Ref. 2; AAD12517." evidence="1" ref="2">
    <original>EP</original>
    <variation>DA</variation>
    <location>
        <begin position="200"/>
        <end position="201"/>
    </location>
</feature>
<protein>
    <recommendedName>
        <fullName>Uncharacterized glycosyltransferase MG025</fullName>
        <ecNumber>2.4.-.-</ecNumber>
    </recommendedName>
</protein>
<accession>P47271</accession>
<accession>Q49359</accession>
<gene>
    <name type="ordered locus">MG025</name>
</gene>
<comment type="similarity">
    <text evidence="1">Belongs to the glycosyltransferase 2 family.</text>
</comment>
<name>Y025_MYCGE</name>
<reference key="1">
    <citation type="journal article" date="1995" name="Science">
        <title>The minimal gene complement of Mycoplasma genitalium.</title>
        <authorList>
            <person name="Fraser C.M."/>
            <person name="Gocayne J.D."/>
            <person name="White O."/>
            <person name="Adams M.D."/>
            <person name="Clayton R.A."/>
            <person name="Fleischmann R.D."/>
            <person name="Bult C.J."/>
            <person name="Kerlavage A.R."/>
            <person name="Sutton G.G."/>
            <person name="Kelley J.M."/>
            <person name="Fritchman J.L."/>
            <person name="Weidman J.F."/>
            <person name="Small K.V."/>
            <person name="Sandusky M."/>
            <person name="Fuhrmann J.L."/>
            <person name="Nguyen D.T."/>
            <person name="Utterback T.R."/>
            <person name="Saudek D.M."/>
            <person name="Phillips C.A."/>
            <person name="Merrick J.M."/>
            <person name="Tomb J.-F."/>
            <person name="Dougherty B.A."/>
            <person name="Bott K.F."/>
            <person name="Hu P.-C."/>
            <person name="Lucier T.S."/>
            <person name="Peterson S.N."/>
            <person name="Smith H.O."/>
            <person name="Hutchison C.A. III"/>
            <person name="Venter J.C."/>
        </authorList>
    </citation>
    <scope>NUCLEOTIDE SEQUENCE [LARGE SCALE GENOMIC DNA]</scope>
    <source>
        <strain>ATCC 33530 / DSM 19775 / NCTC 10195 / G37</strain>
    </source>
</reference>
<reference key="2">
    <citation type="journal article" date="1993" name="J. Bacteriol.">
        <title>A survey of the Mycoplasma genitalium genome by using random sequencing.</title>
        <authorList>
            <person name="Peterson S.N."/>
            <person name="Hu P.-C."/>
            <person name="Bott K.F."/>
            <person name="Hutchison C.A. III"/>
        </authorList>
    </citation>
    <scope>NUCLEOTIDE SEQUENCE [GENOMIC DNA] OF 172-298</scope>
    <source>
        <strain>ATCC 33530 / DSM 19775 / NCTC 10195 / G37</strain>
    </source>
</reference>
<organism>
    <name type="scientific">Mycoplasma genitalium (strain ATCC 33530 / DSM 19775 / NCTC 10195 / G37)</name>
    <name type="common">Mycoplasmoides genitalium</name>
    <dbReference type="NCBI Taxonomy" id="243273"/>
    <lineage>
        <taxon>Bacteria</taxon>
        <taxon>Bacillati</taxon>
        <taxon>Mycoplasmatota</taxon>
        <taxon>Mycoplasmoidales</taxon>
        <taxon>Mycoplasmoidaceae</taxon>
        <taxon>Mycoplasmoides</taxon>
    </lineage>
</organism>
<keyword id="KW-0328">Glycosyltransferase</keyword>
<keyword id="KW-1185">Reference proteome</keyword>
<keyword id="KW-0808">Transferase</keyword>
<dbReference type="EC" id="2.4.-.-"/>
<dbReference type="EMBL" id="L43967">
    <property type="protein sequence ID" value="AAC71241.1"/>
    <property type="molecule type" value="Genomic_DNA"/>
</dbReference>
<dbReference type="EMBL" id="U02253">
    <property type="protein sequence ID" value="AAD12517.1"/>
    <property type="molecule type" value="Genomic_DNA"/>
</dbReference>
<dbReference type="PIR" id="G64202">
    <property type="entry name" value="G64202"/>
</dbReference>
<dbReference type="RefSeq" id="WP_010869293.1">
    <property type="nucleotide sequence ID" value="NC_000908.2"/>
</dbReference>
<dbReference type="SMR" id="P47271"/>
<dbReference type="STRING" id="243273.MG_025"/>
<dbReference type="CAZy" id="GT2">
    <property type="family name" value="Glycosyltransferase Family 2"/>
</dbReference>
<dbReference type="GeneID" id="88282140"/>
<dbReference type="KEGG" id="mge:MG_025"/>
<dbReference type="eggNOG" id="COG0463">
    <property type="taxonomic scope" value="Bacteria"/>
</dbReference>
<dbReference type="HOGENOM" id="CLU_079042_0_0_14"/>
<dbReference type="InParanoid" id="P47271"/>
<dbReference type="Proteomes" id="UP000000807">
    <property type="component" value="Chromosome"/>
</dbReference>
<dbReference type="GO" id="GO:0016757">
    <property type="term" value="F:glycosyltransferase activity"/>
    <property type="evidence" value="ECO:0000318"/>
    <property type="project" value="GO_Central"/>
</dbReference>
<dbReference type="GO" id="GO:0016758">
    <property type="term" value="F:hexosyltransferase activity"/>
    <property type="evidence" value="ECO:0007669"/>
    <property type="project" value="UniProtKB-ARBA"/>
</dbReference>
<dbReference type="GO" id="GO:0009058">
    <property type="term" value="P:biosynthetic process"/>
    <property type="evidence" value="ECO:0007669"/>
    <property type="project" value="UniProtKB-ARBA"/>
</dbReference>
<dbReference type="CDD" id="cd00761">
    <property type="entry name" value="Glyco_tranf_GTA_type"/>
    <property type="match status" value="1"/>
</dbReference>
<dbReference type="FunFam" id="3.90.550.10:FF:000251">
    <property type="entry name" value="Beta-1,3-glucosyltransferase"/>
    <property type="match status" value="1"/>
</dbReference>
<dbReference type="Gene3D" id="3.90.550.10">
    <property type="entry name" value="Spore Coat Polysaccharide Biosynthesis Protein SpsA, Chain A"/>
    <property type="match status" value="1"/>
</dbReference>
<dbReference type="InterPro" id="IPR001173">
    <property type="entry name" value="Glyco_trans_2-like"/>
</dbReference>
<dbReference type="InterPro" id="IPR029044">
    <property type="entry name" value="Nucleotide-diphossugar_trans"/>
</dbReference>
<dbReference type="PANTHER" id="PTHR22916">
    <property type="entry name" value="GLYCOSYLTRANSFERASE"/>
    <property type="match status" value="1"/>
</dbReference>
<dbReference type="PANTHER" id="PTHR22916:SF3">
    <property type="entry name" value="UDP-GLCNAC:BETAGAL BETA-1,3-N-ACETYLGLUCOSAMINYLTRANSFERASE-LIKE PROTEIN 1"/>
    <property type="match status" value="1"/>
</dbReference>
<dbReference type="Pfam" id="PF00535">
    <property type="entry name" value="Glycos_transf_2"/>
    <property type="match status" value="1"/>
</dbReference>
<dbReference type="SUPFAM" id="SSF53448">
    <property type="entry name" value="Nucleotide-diphospho-sugar transferases"/>
    <property type="match status" value="1"/>
</dbReference>
<proteinExistence type="inferred from homology"/>
<evidence type="ECO:0000305" key="1"/>
<sequence>MPSKYLFTVIIPTYNCCQYIKKALDSLLLQNEYFLKTQVLIVNDGSLDNTKEVVSDYLIKYSNISYFEKTNGNWGSVINYVKKNKLALGQYITVLDSDDYFLKDSFKKVARFFGHDMIIGAFYCYINENKTRFLKPYFGKTGVIKEHTKLRTPHSQPIAKFYSNKLFYELHDLKEKLFFQDCLMYHDAINRVESVFYLREPLAVWFSTRPGNSTTTSWENPNKFNAWCEILQKMNLYGAGIVIYIYTMLPGFLKQLKKKQLILNLNHKPAYTWLPKPLAFIFGGLMAFKTRKYIKYPK</sequence>